<reference key="1">
    <citation type="journal article" date="1997" name="Nature">
        <title>The complete genome sequence of the Gram-positive bacterium Bacillus subtilis.</title>
        <authorList>
            <person name="Kunst F."/>
            <person name="Ogasawara N."/>
            <person name="Moszer I."/>
            <person name="Albertini A.M."/>
            <person name="Alloni G."/>
            <person name="Azevedo V."/>
            <person name="Bertero M.G."/>
            <person name="Bessieres P."/>
            <person name="Bolotin A."/>
            <person name="Borchert S."/>
            <person name="Borriss R."/>
            <person name="Boursier L."/>
            <person name="Brans A."/>
            <person name="Braun M."/>
            <person name="Brignell S.C."/>
            <person name="Bron S."/>
            <person name="Brouillet S."/>
            <person name="Bruschi C.V."/>
            <person name="Caldwell B."/>
            <person name="Capuano V."/>
            <person name="Carter N.M."/>
            <person name="Choi S.-K."/>
            <person name="Codani J.-J."/>
            <person name="Connerton I.F."/>
            <person name="Cummings N.J."/>
            <person name="Daniel R.A."/>
            <person name="Denizot F."/>
            <person name="Devine K.M."/>
            <person name="Duesterhoeft A."/>
            <person name="Ehrlich S.D."/>
            <person name="Emmerson P.T."/>
            <person name="Entian K.-D."/>
            <person name="Errington J."/>
            <person name="Fabret C."/>
            <person name="Ferrari E."/>
            <person name="Foulger D."/>
            <person name="Fritz C."/>
            <person name="Fujita M."/>
            <person name="Fujita Y."/>
            <person name="Fuma S."/>
            <person name="Galizzi A."/>
            <person name="Galleron N."/>
            <person name="Ghim S.-Y."/>
            <person name="Glaser P."/>
            <person name="Goffeau A."/>
            <person name="Golightly E.J."/>
            <person name="Grandi G."/>
            <person name="Guiseppi G."/>
            <person name="Guy B.J."/>
            <person name="Haga K."/>
            <person name="Haiech J."/>
            <person name="Harwood C.R."/>
            <person name="Henaut A."/>
            <person name="Hilbert H."/>
            <person name="Holsappel S."/>
            <person name="Hosono S."/>
            <person name="Hullo M.-F."/>
            <person name="Itaya M."/>
            <person name="Jones L.-M."/>
            <person name="Joris B."/>
            <person name="Karamata D."/>
            <person name="Kasahara Y."/>
            <person name="Klaerr-Blanchard M."/>
            <person name="Klein C."/>
            <person name="Kobayashi Y."/>
            <person name="Koetter P."/>
            <person name="Koningstein G."/>
            <person name="Krogh S."/>
            <person name="Kumano M."/>
            <person name="Kurita K."/>
            <person name="Lapidus A."/>
            <person name="Lardinois S."/>
            <person name="Lauber J."/>
            <person name="Lazarevic V."/>
            <person name="Lee S.-M."/>
            <person name="Levine A."/>
            <person name="Liu H."/>
            <person name="Masuda S."/>
            <person name="Mauel C."/>
            <person name="Medigue C."/>
            <person name="Medina N."/>
            <person name="Mellado R.P."/>
            <person name="Mizuno M."/>
            <person name="Moestl D."/>
            <person name="Nakai S."/>
            <person name="Noback M."/>
            <person name="Noone D."/>
            <person name="O'Reilly M."/>
            <person name="Ogawa K."/>
            <person name="Ogiwara A."/>
            <person name="Oudega B."/>
            <person name="Park S.-H."/>
            <person name="Parro V."/>
            <person name="Pohl T.M."/>
            <person name="Portetelle D."/>
            <person name="Porwollik S."/>
            <person name="Prescott A.M."/>
            <person name="Presecan E."/>
            <person name="Pujic P."/>
            <person name="Purnelle B."/>
            <person name="Rapoport G."/>
            <person name="Rey M."/>
            <person name="Reynolds S."/>
            <person name="Rieger M."/>
            <person name="Rivolta C."/>
            <person name="Rocha E."/>
            <person name="Roche B."/>
            <person name="Rose M."/>
            <person name="Sadaie Y."/>
            <person name="Sato T."/>
            <person name="Scanlan E."/>
            <person name="Schleich S."/>
            <person name="Schroeter R."/>
            <person name="Scoffone F."/>
            <person name="Sekiguchi J."/>
            <person name="Sekowska A."/>
            <person name="Seror S.J."/>
            <person name="Serror P."/>
            <person name="Shin B.-S."/>
            <person name="Soldo B."/>
            <person name="Sorokin A."/>
            <person name="Tacconi E."/>
            <person name="Takagi T."/>
            <person name="Takahashi H."/>
            <person name="Takemaru K."/>
            <person name="Takeuchi M."/>
            <person name="Tamakoshi A."/>
            <person name="Tanaka T."/>
            <person name="Terpstra P."/>
            <person name="Tognoni A."/>
            <person name="Tosato V."/>
            <person name="Uchiyama S."/>
            <person name="Vandenbol M."/>
            <person name="Vannier F."/>
            <person name="Vassarotti A."/>
            <person name="Viari A."/>
            <person name="Wambutt R."/>
            <person name="Wedler E."/>
            <person name="Wedler H."/>
            <person name="Weitzenegger T."/>
            <person name="Winters P."/>
            <person name="Wipat A."/>
            <person name="Yamamoto H."/>
            <person name="Yamane K."/>
            <person name="Yasumoto K."/>
            <person name="Yata K."/>
            <person name="Yoshida K."/>
            <person name="Yoshikawa H.-F."/>
            <person name="Zumstein E."/>
            <person name="Yoshikawa H."/>
            <person name="Danchin A."/>
        </authorList>
    </citation>
    <scope>NUCLEOTIDE SEQUENCE [LARGE SCALE GENOMIC DNA]</scope>
    <source>
        <strain>168</strain>
    </source>
</reference>
<reference key="2">
    <citation type="submission" date="2005-01" db="PDB data bank">
        <title>The crystal structure of APC1116 from Bacillus subtilis.</title>
        <authorList>
            <consortium name="Midwest center for structural genomics (MCSG)"/>
        </authorList>
    </citation>
    <scope>X-RAY CRYSTALLOGRAPHY (1.7 ANGSTROMS)</scope>
</reference>
<proteinExistence type="evidence at protein level"/>
<name>YESE_BACSU</name>
<evidence type="ECO:0000305" key="1"/>
<evidence type="ECO:0007829" key="2">
    <source>
        <dbReference type="PDB" id="1S5A"/>
    </source>
</evidence>
<accession>O31511</accession>
<protein>
    <recommendedName>
        <fullName>Uncharacterized protein YesE</fullName>
    </recommendedName>
</protein>
<gene>
    <name type="primary">yesE</name>
    <name type="synonym">yeeL</name>
    <name type="ordered locus">BSU06870</name>
</gene>
<dbReference type="EMBL" id="AL009126">
    <property type="protein sequence ID" value="CAB12506.1"/>
    <property type="molecule type" value="Genomic_DNA"/>
</dbReference>
<dbReference type="PIR" id="G69795">
    <property type="entry name" value="G69795"/>
</dbReference>
<dbReference type="RefSeq" id="NP_388568.1">
    <property type="nucleotide sequence ID" value="NC_000964.3"/>
</dbReference>
<dbReference type="RefSeq" id="WP_003233857.1">
    <property type="nucleotide sequence ID" value="NZ_OZ025638.1"/>
</dbReference>
<dbReference type="PDB" id="1S5A">
    <property type="method" value="X-ray"/>
    <property type="resolution" value="1.70 A"/>
    <property type="chains" value="A/B/C/D=1-147"/>
</dbReference>
<dbReference type="PDBsum" id="1S5A"/>
<dbReference type="SMR" id="O31511"/>
<dbReference type="FunCoup" id="O31511">
    <property type="interactions" value="59"/>
</dbReference>
<dbReference type="STRING" id="224308.BSU06870"/>
<dbReference type="PaxDb" id="224308-BSU06870"/>
<dbReference type="DNASU" id="936064"/>
<dbReference type="EnsemblBacteria" id="CAB12506">
    <property type="protein sequence ID" value="CAB12506"/>
    <property type="gene ID" value="BSU_06870"/>
</dbReference>
<dbReference type="GeneID" id="936064"/>
<dbReference type="KEGG" id="bsu:BSU06870"/>
<dbReference type="PATRIC" id="fig|224308.179.peg.747"/>
<dbReference type="eggNOG" id="COG3631">
    <property type="taxonomic scope" value="Bacteria"/>
</dbReference>
<dbReference type="InParanoid" id="O31511"/>
<dbReference type="OrthoDB" id="2083380at2"/>
<dbReference type="PhylomeDB" id="O31511"/>
<dbReference type="BioCyc" id="BSUB:BSU06870-MONOMER"/>
<dbReference type="EvolutionaryTrace" id="O31511"/>
<dbReference type="Proteomes" id="UP000001570">
    <property type="component" value="Chromosome"/>
</dbReference>
<dbReference type="Gene3D" id="3.10.450.50">
    <property type="match status" value="1"/>
</dbReference>
<dbReference type="InterPro" id="IPR032710">
    <property type="entry name" value="NTF2-like_dom_sf"/>
</dbReference>
<dbReference type="InterPro" id="IPR037401">
    <property type="entry name" value="SnoaL-like"/>
</dbReference>
<dbReference type="Pfam" id="PF12680">
    <property type="entry name" value="SnoaL_2"/>
    <property type="match status" value="1"/>
</dbReference>
<dbReference type="SUPFAM" id="SSF54427">
    <property type="entry name" value="NTF2-like"/>
    <property type="match status" value="1"/>
</dbReference>
<comment type="similarity">
    <text evidence="1">Belongs to the limonene-1,2-epoxide hydrolase family.</text>
</comment>
<organism>
    <name type="scientific">Bacillus subtilis (strain 168)</name>
    <dbReference type="NCBI Taxonomy" id="224308"/>
    <lineage>
        <taxon>Bacteria</taxon>
        <taxon>Bacillati</taxon>
        <taxon>Bacillota</taxon>
        <taxon>Bacilli</taxon>
        <taxon>Bacillales</taxon>
        <taxon>Bacillaceae</taxon>
        <taxon>Bacillus</taxon>
    </lineage>
</organism>
<sequence>MLMNEFEKACETLRKFMAYMLEKDMKSWTELWDENAVFEFPYAPEGSPKRIEGKAAIYDYIKDYPKQIHLSSFTAPTVYRSADSNTVIAEFQCDGHVIETGLPYRQSYISVIETRDGRIVRYRDYWNPLVVKEAFGGSFLQTEESGK</sequence>
<feature type="chain" id="PRO_0000049518" description="Uncharacterized protein YesE">
    <location>
        <begin position="1"/>
        <end position="147"/>
    </location>
</feature>
<feature type="helix" evidence="2">
    <location>
        <begin position="5"/>
        <end position="21"/>
    </location>
</feature>
<feature type="helix" evidence="2">
    <location>
        <begin position="25"/>
        <end position="29"/>
    </location>
</feature>
<feature type="strand" evidence="2">
    <location>
        <begin position="32"/>
        <end position="39"/>
    </location>
</feature>
<feature type="strand" evidence="2">
    <location>
        <begin position="49"/>
        <end position="53"/>
    </location>
</feature>
<feature type="helix" evidence="2">
    <location>
        <begin position="54"/>
        <end position="61"/>
    </location>
</feature>
<feature type="helix" evidence="2">
    <location>
        <begin position="64"/>
        <end position="67"/>
    </location>
</feature>
<feature type="strand" evidence="2">
    <location>
        <begin position="68"/>
        <end position="73"/>
    </location>
</feature>
<feature type="strand" evidence="2">
    <location>
        <begin position="77"/>
        <end position="97"/>
    </location>
</feature>
<feature type="turn" evidence="2">
    <location>
        <begin position="98"/>
        <end position="100"/>
    </location>
</feature>
<feature type="strand" evidence="2">
    <location>
        <begin position="107"/>
        <end position="115"/>
    </location>
</feature>
<feature type="strand" evidence="2">
    <location>
        <begin position="118"/>
        <end position="126"/>
    </location>
</feature>
<feature type="helix" evidence="2">
    <location>
        <begin position="128"/>
        <end position="134"/>
    </location>
</feature>
<feature type="turn" evidence="2">
    <location>
        <begin position="135"/>
        <end position="137"/>
    </location>
</feature>
<keyword id="KW-0002">3D-structure</keyword>
<keyword id="KW-1185">Reference proteome</keyword>